<feature type="chain" id="PRO_1000090002" description="Acetate kinase">
    <location>
        <begin position="1"/>
        <end position="401"/>
    </location>
</feature>
<feature type="active site" description="Proton donor/acceptor" evidence="1">
    <location>
        <position position="148"/>
    </location>
</feature>
<feature type="binding site" evidence="1">
    <location>
        <position position="7"/>
    </location>
    <ligand>
        <name>Mg(2+)</name>
        <dbReference type="ChEBI" id="CHEBI:18420"/>
    </ligand>
</feature>
<feature type="binding site" evidence="1">
    <location>
        <position position="14"/>
    </location>
    <ligand>
        <name>ATP</name>
        <dbReference type="ChEBI" id="CHEBI:30616"/>
    </ligand>
</feature>
<feature type="binding site" evidence="1">
    <location>
        <position position="91"/>
    </location>
    <ligand>
        <name>substrate</name>
    </ligand>
</feature>
<feature type="binding site" evidence="1">
    <location>
        <begin position="208"/>
        <end position="212"/>
    </location>
    <ligand>
        <name>ATP</name>
        <dbReference type="ChEBI" id="CHEBI:30616"/>
    </ligand>
</feature>
<feature type="binding site" evidence="1">
    <location>
        <begin position="283"/>
        <end position="285"/>
    </location>
    <ligand>
        <name>ATP</name>
        <dbReference type="ChEBI" id="CHEBI:30616"/>
    </ligand>
</feature>
<feature type="binding site" evidence="1">
    <location>
        <begin position="332"/>
        <end position="336"/>
    </location>
    <ligand>
        <name>ATP</name>
        <dbReference type="ChEBI" id="CHEBI:30616"/>
    </ligand>
</feature>
<feature type="binding site" evidence="1">
    <location>
        <position position="385"/>
    </location>
    <ligand>
        <name>Mg(2+)</name>
        <dbReference type="ChEBI" id="CHEBI:18420"/>
    </ligand>
</feature>
<feature type="site" description="Transition state stabilizer" evidence="1">
    <location>
        <position position="180"/>
    </location>
</feature>
<feature type="site" description="Transition state stabilizer" evidence="1">
    <location>
        <position position="241"/>
    </location>
</feature>
<name>ACKA_THEP3</name>
<gene>
    <name evidence="1" type="primary">ackA</name>
    <name type="ordered locus">Teth39_1295</name>
</gene>
<dbReference type="EC" id="2.7.2.1" evidence="1"/>
<dbReference type="EMBL" id="CP000924">
    <property type="protein sequence ID" value="ABY94949.1"/>
    <property type="molecule type" value="Genomic_DNA"/>
</dbReference>
<dbReference type="RefSeq" id="WP_012269380.1">
    <property type="nucleotide sequence ID" value="NC_010321.1"/>
</dbReference>
<dbReference type="SMR" id="B0K9Y6"/>
<dbReference type="STRING" id="340099.Teth39_1295"/>
<dbReference type="KEGG" id="tpd:Teth39_1295"/>
<dbReference type="eggNOG" id="COG0282">
    <property type="taxonomic scope" value="Bacteria"/>
</dbReference>
<dbReference type="HOGENOM" id="CLU_020352_0_1_9"/>
<dbReference type="UniPathway" id="UPA00340">
    <property type="reaction ID" value="UER00458"/>
</dbReference>
<dbReference type="Proteomes" id="UP000002156">
    <property type="component" value="Chromosome"/>
</dbReference>
<dbReference type="GO" id="GO:0005737">
    <property type="term" value="C:cytoplasm"/>
    <property type="evidence" value="ECO:0007669"/>
    <property type="project" value="UniProtKB-SubCell"/>
</dbReference>
<dbReference type="GO" id="GO:0008776">
    <property type="term" value="F:acetate kinase activity"/>
    <property type="evidence" value="ECO:0007669"/>
    <property type="project" value="UniProtKB-UniRule"/>
</dbReference>
<dbReference type="GO" id="GO:0005524">
    <property type="term" value="F:ATP binding"/>
    <property type="evidence" value="ECO:0007669"/>
    <property type="project" value="UniProtKB-KW"/>
</dbReference>
<dbReference type="GO" id="GO:0000287">
    <property type="term" value="F:magnesium ion binding"/>
    <property type="evidence" value="ECO:0007669"/>
    <property type="project" value="UniProtKB-UniRule"/>
</dbReference>
<dbReference type="GO" id="GO:0006083">
    <property type="term" value="P:acetate metabolic process"/>
    <property type="evidence" value="ECO:0007669"/>
    <property type="project" value="TreeGrafter"/>
</dbReference>
<dbReference type="GO" id="GO:0006085">
    <property type="term" value="P:acetyl-CoA biosynthetic process"/>
    <property type="evidence" value="ECO:0007669"/>
    <property type="project" value="UniProtKB-UniRule"/>
</dbReference>
<dbReference type="CDD" id="cd24010">
    <property type="entry name" value="ASKHA_NBD_AcK_PK"/>
    <property type="match status" value="1"/>
</dbReference>
<dbReference type="Gene3D" id="3.30.420.40">
    <property type="match status" value="2"/>
</dbReference>
<dbReference type="HAMAP" id="MF_00020">
    <property type="entry name" value="Acetate_kinase"/>
    <property type="match status" value="1"/>
</dbReference>
<dbReference type="InterPro" id="IPR004372">
    <property type="entry name" value="Ac/propionate_kinase"/>
</dbReference>
<dbReference type="InterPro" id="IPR000890">
    <property type="entry name" value="Aliphatic_acid_kin_short-chain"/>
</dbReference>
<dbReference type="InterPro" id="IPR023865">
    <property type="entry name" value="Aliphatic_acid_kinase_CS"/>
</dbReference>
<dbReference type="InterPro" id="IPR043129">
    <property type="entry name" value="ATPase_NBD"/>
</dbReference>
<dbReference type="NCBIfam" id="TIGR00016">
    <property type="entry name" value="ackA"/>
    <property type="match status" value="1"/>
</dbReference>
<dbReference type="PANTHER" id="PTHR21060">
    <property type="entry name" value="ACETATE KINASE"/>
    <property type="match status" value="1"/>
</dbReference>
<dbReference type="PANTHER" id="PTHR21060:SF15">
    <property type="entry name" value="ACETATE KINASE-RELATED"/>
    <property type="match status" value="1"/>
</dbReference>
<dbReference type="Pfam" id="PF00871">
    <property type="entry name" value="Acetate_kinase"/>
    <property type="match status" value="1"/>
</dbReference>
<dbReference type="PIRSF" id="PIRSF000722">
    <property type="entry name" value="Acetate_prop_kin"/>
    <property type="match status" value="1"/>
</dbReference>
<dbReference type="PRINTS" id="PR00471">
    <property type="entry name" value="ACETATEKNASE"/>
</dbReference>
<dbReference type="SUPFAM" id="SSF53067">
    <property type="entry name" value="Actin-like ATPase domain"/>
    <property type="match status" value="2"/>
</dbReference>
<dbReference type="PROSITE" id="PS01075">
    <property type="entry name" value="ACETATE_KINASE_1"/>
    <property type="match status" value="1"/>
</dbReference>
<dbReference type="PROSITE" id="PS01076">
    <property type="entry name" value="ACETATE_KINASE_2"/>
    <property type="match status" value="1"/>
</dbReference>
<reference key="1">
    <citation type="submission" date="2008-01" db="EMBL/GenBank/DDBJ databases">
        <title>Complete sequence of Thermoanaerobacter pseudethanolicus 39E.</title>
        <authorList>
            <person name="Copeland A."/>
            <person name="Lucas S."/>
            <person name="Lapidus A."/>
            <person name="Barry K."/>
            <person name="Glavina del Rio T."/>
            <person name="Dalin E."/>
            <person name="Tice H."/>
            <person name="Pitluck S."/>
            <person name="Bruce D."/>
            <person name="Goodwin L."/>
            <person name="Saunders E."/>
            <person name="Brettin T."/>
            <person name="Detter J.C."/>
            <person name="Han C."/>
            <person name="Schmutz J."/>
            <person name="Larimer F."/>
            <person name="Land M."/>
            <person name="Hauser L."/>
            <person name="Kyrpides N."/>
            <person name="Lykidis A."/>
            <person name="Hemme C."/>
            <person name="Fields M.W."/>
            <person name="He Z."/>
            <person name="Zhou J."/>
            <person name="Richardson P."/>
        </authorList>
    </citation>
    <scope>NUCLEOTIDE SEQUENCE [LARGE SCALE GENOMIC DNA]</scope>
    <source>
        <strain>ATCC 33223 / DSM 2355 / 39E</strain>
    </source>
</reference>
<proteinExistence type="inferred from homology"/>
<organism>
    <name type="scientific">Thermoanaerobacter pseudethanolicus (strain ATCC 33223 / 39E)</name>
    <name type="common">Clostridium thermohydrosulfuricum</name>
    <dbReference type="NCBI Taxonomy" id="340099"/>
    <lineage>
        <taxon>Bacteria</taxon>
        <taxon>Bacillati</taxon>
        <taxon>Bacillota</taxon>
        <taxon>Clostridia</taxon>
        <taxon>Thermoanaerobacterales</taxon>
        <taxon>Thermoanaerobacteraceae</taxon>
        <taxon>Thermoanaerobacter</taxon>
    </lineage>
</organism>
<protein>
    <recommendedName>
        <fullName evidence="1">Acetate kinase</fullName>
        <ecNumber evidence="1">2.7.2.1</ecNumber>
    </recommendedName>
    <alternativeName>
        <fullName evidence="1">Acetokinase</fullName>
    </alternativeName>
</protein>
<keyword id="KW-0067">ATP-binding</keyword>
<keyword id="KW-0963">Cytoplasm</keyword>
<keyword id="KW-0418">Kinase</keyword>
<keyword id="KW-0460">Magnesium</keyword>
<keyword id="KW-0479">Metal-binding</keyword>
<keyword id="KW-0547">Nucleotide-binding</keyword>
<keyword id="KW-1185">Reference proteome</keyword>
<keyword id="KW-0808">Transferase</keyword>
<sequence>MKILVMNCGSSSLKYQLLDMDNGKVLAKGLAERIGINDSLLTHQVEGKDKIKIQKDMKNHKEAIQIVLEALVDKEIGILKDMKEIDAVGHRVVHGGEFFTDSVLIDDEVIKKLEACIDLAPLHNPANIEGIKACRQIMPGVPMVAVFDTAFHQTMPDYAYIYPIPYEYYEKYRIRRYGFHGTSHKYVSLRAAEILKRPIEELKIITCHLGNGSSIAAVKGGKSIDTSMGFTPLEGLAMGTRSGNVDPSIITFLMEKEGLTAEQVIDILNKKSGVYGISGISNDFRDIENAAFKEGHKRAMLALKVFAYRVKKTIGSYTAAMGGVDVIVFTAGVGENGPEMREFILEDLEFLGFKLDKEKNKVRGKEEIISTEDSKVKVMVIPTNEEYMIAKDTEKLVKGLK</sequence>
<accession>B0K9Y6</accession>
<comment type="function">
    <text evidence="1">Catalyzes the formation of acetyl phosphate from acetate and ATP. Can also catalyze the reverse reaction.</text>
</comment>
<comment type="catalytic activity">
    <reaction evidence="1">
        <text>acetate + ATP = acetyl phosphate + ADP</text>
        <dbReference type="Rhea" id="RHEA:11352"/>
        <dbReference type="ChEBI" id="CHEBI:22191"/>
        <dbReference type="ChEBI" id="CHEBI:30089"/>
        <dbReference type="ChEBI" id="CHEBI:30616"/>
        <dbReference type="ChEBI" id="CHEBI:456216"/>
        <dbReference type="EC" id="2.7.2.1"/>
    </reaction>
</comment>
<comment type="cofactor">
    <cofactor evidence="1">
        <name>Mg(2+)</name>
        <dbReference type="ChEBI" id="CHEBI:18420"/>
    </cofactor>
    <cofactor evidence="1">
        <name>Mn(2+)</name>
        <dbReference type="ChEBI" id="CHEBI:29035"/>
    </cofactor>
    <text evidence="1">Mg(2+). Can also accept Mn(2+).</text>
</comment>
<comment type="pathway">
    <text evidence="1">Metabolic intermediate biosynthesis; acetyl-CoA biosynthesis; acetyl-CoA from acetate: step 1/2.</text>
</comment>
<comment type="subunit">
    <text evidence="1">Homodimer.</text>
</comment>
<comment type="subcellular location">
    <subcellularLocation>
        <location evidence="1">Cytoplasm</location>
    </subcellularLocation>
</comment>
<comment type="similarity">
    <text evidence="1">Belongs to the acetokinase family.</text>
</comment>
<evidence type="ECO:0000255" key="1">
    <source>
        <dbReference type="HAMAP-Rule" id="MF_00020"/>
    </source>
</evidence>